<name>MSHR_SAIOE</name>
<accession>Q864H0</accession>
<feature type="chain" id="PRO_0000069849" description="Melanocyte-stimulating hormone receptor">
    <location>
        <begin position="1"/>
        <end position="317"/>
    </location>
</feature>
<feature type="topological domain" description="Extracellular" evidence="2">
    <location>
        <begin position="1"/>
        <end position="37"/>
    </location>
</feature>
<feature type="transmembrane region" description="Helical; Name=1" evidence="2">
    <location>
        <begin position="38"/>
        <end position="63"/>
    </location>
</feature>
<feature type="topological domain" description="Cytoplasmic" evidence="2">
    <location>
        <begin position="64"/>
        <end position="72"/>
    </location>
</feature>
<feature type="transmembrane region" description="Helical; Name=2" evidence="2">
    <location>
        <begin position="73"/>
        <end position="93"/>
    </location>
</feature>
<feature type="topological domain" description="Extracellular" evidence="2">
    <location>
        <begin position="94"/>
        <end position="118"/>
    </location>
</feature>
<feature type="transmembrane region" description="Helical; Name=3" evidence="2">
    <location>
        <begin position="119"/>
        <end position="140"/>
    </location>
</feature>
<feature type="topological domain" description="Cytoplasmic" evidence="2">
    <location>
        <begin position="141"/>
        <end position="163"/>
    </location>
</feature>
<feature type="transmembrane region" description="Helical; Name=4" evidence="2">
    <location>
        <begin position="164"/>
        <end position="183"/>
    </location>
</feature>
<feature type="topological domain" description="Extracellular" evidence="2">
    <location>
        <begin position="184"/>
        <end position="191"/>
    </location>
</feature>
<feature type="transmembrane region" description="Helical; Name=5" evidence="2">
    <location>
        <begin position="192"/>
        <end position="211"/>
    </location>
</feature>
<feature type="topological domain" description="Cytoplasmic" evidence="2">
    <location>
        <begin position="212"/>
        <end position="240"/>
    </location>
</feature>
<feature type="transmembrane region" description="Helical; Name=6" evidence="2">
    <location>
        <begin position="241"/>
        <end position="266"/>
    </location>
</feature>
<feature type="topological domain" description="Extracellular" evidence="2">
    <location>
        <begin position="267"/>
        <end position="279"/>
    </location>
</feature>
<feature type="transmembrane region" description="Helical; Name=7" evidence="2">
    <location>
        <begin position="280"/>
        <end position="300"/>
    </location>
</feature>
<feature type="topological domain" description="Cytoplasmic" evidence="2">
    <location>
        <begin position="301"/>
        <end position="317"/>
    </location>
</feature>
<feature type="lipid moiety-binding region" description="S-palmitoyl cysteine" evidence="2">
    <location>
        <position position="315"/>
    </location>
</feature>
<feature type="glycosylation site" description="N-linked (GlcNAc...) asparagine" evidence="2">
    <location>
        <position position="29"/>
    </location>
</feature>
<keyword id="KW-1003">Cell membrane</keyword>
<keyword id="KW-0297">G-protein coupled receptor</keyword>
<keyword id="KW-0325">Glycoprotein</keyword>
<keyword id="KW-0449">Lipoprotein</keyword>
<keyword id="KW-0472">Membrane</keyword>
<keyword id="KW-0564">Palmitate</keyword>
<keyword id="KW-0675">Receptor</keyword>
<keyword id="KW-0807">Transducer</keyword>
<keyword id="KW-0812">Transmembrane</keyword>
<keyword id="KW-1133">Transmembrane helix</keyword>
<gene>
    <name type="primary">MC1R</name>
</gene>
<dbReference type="EMBL" id="AY205127">
    <property type="protein sequence ID" value="AAP31001.1"/>
    <property type="molecule type" value="Genomic_DNA"/>
</dbReference>
<dbReference type="SMR" id="Q864H0"/>
<dbReference type="GlyCosmos" id="Q864H0">
    <property type="glycosylation" value="1 site, No reported glycans"/>
</dbReference>
<dbReference type="GO" id="GO:0005886">
    <property type="term" value="C:plasma membrane"/>
    <property type="evidence" value="ECO:0000250"/>
    <property type="project" value="UniProtKB"/>
</dbReference>
<dbReference type="GO" id="GO:0004980">
    <property type="term" value="F:melanocyte-stimulating hormone receptor activity"/>
    <property type="evidence" value="ECO:0007669"/>
    <property type="project" value="InterPro"/>
</dbReference>
<dbReference type="GO" id="GO:0007189">
    <property type="term" value="P:adenylate cyclase-activating G protein-coupled receptor signaling pathway"/>
    <property type="evidence" value="ECO:0007669"/>
    <property type="project" value="UniProtKB-ARBA"/>
</dbReference>
<dbReference type="CDD" id="cd15351">
    <property type="entry name" value="7tmA_MC1R"/>
    <property type="match status" value="1"/>
</dbReference>
<dbReference type="FunFam" id="1.20.1070.10:FF:000211">
    <property type="entry name" value="Melanocyte-stimulating hormone receptor"/>
    <property type="match status" value="1"/>
</dbReference>
<dbReference type="Gene3D" id="1.20.1070.10">
    <property type="entry name" value="Rhodopsin 7-helix transmembrane proteins"/>
    <property type="match status" value="1"/>
</dbReference>
<dbReference type="InterPro" id="IPR000276">
    <property type="entry name" value="GPCR_Rhodpsn"/>
</dbReference>
<dbReference type="InterPro" id="IPR017452">
    <property type="entry name" value="GPCR_Rhodpsn_7TM"/>
</dbReference>
<dbReference type="InterPro" id="IPR001671">
    <property type="entry name" value="Melcrt_ACTH_rcpt"/>
</dbReference>
<dbReference type="InterPro" id="IPR000761">
    <property type="entry name" value="MSH_rcpt"/>
</dbReference>
<dbReference type="PANTHER" id="PTHR22750">
    <property type="entry name" value="G-PROTEIN COUPLED RECEPTOR"/>
    <property type="match status" value="1"/>
</dbReference>
<dbReference type="Pfam" id="PF00001">
    <property type="entry name" value="7tm_1"/>
    <property type="match status" value="2"/>
</dbReference>
<dbReference type="PRINTS" id="PR00237">
    <property type="entry name" value="GPCRRHODOPSN"/>
</dbReference>
<dbReference type="PRINTS" id="PR00534">
    <property type="entry name" value="MCRFAMILY"/>
</dbReference>
<dbReference type="PRINTS" id="PR00536">
    <property type="entry name" value="MELNOCYTESHR"/>
</dbReference>
<dbReference type="SMART" id="SM01381">
    <property type="entry name" value="7TM_GPCR_Srsx"/>
    <property type="match status" value="1"/>
</dbReference>
<dbReference type="SUPFAM" id="SSF81321">
    <property type="entry name" value="Family A G protein-coupled receptor-like"/>
    <property type="match status" value="1"/>
</dbReference>
<dbReference type="PROSITE" id="PS00237">
    <property type="entry name" value="G_PROTEIN_RECEP_F1_1"/>
    <property type="match status" value="1"/>
</dbReference>
<dbReference type="PROSITE" id="PS50262">
    <property type="entry name" value="G_PROTEIN_RECEP_F1_2"/>
    <property type="match status" value="1"/>
</dbReference>
<protein>
    <recommendedName>
        <fullName>Melanocyte-stimulating hormone receptor</fullName>
        <shortName>MSH-R</shortName>
    </recommendedName>
    <alternativeName>
        <fullName>Melanocortin receptor 1</fullName>
        <shortName>MC1-R</shortName>
    </alternativeName>
</protein>
<reference key="1">
    <citation type="journal article" date="2003" name="Am. J. Phys. Anthropol.">
        <title>Evolution of a pigmentation gene, the melanocortin-1 receptor, in primates.</title>
        <authorList>
            <person name="Mundy N.I."/>
            <person name="Kelly J."/>
        </authorList>
    </citation>
    <scope>NUCLEOTIDE SEQUENCE [GENOMIC DNA]</scope>
    <source>
        <strain>Isolate 128</strain>
    </source>
</reference>
<evidence type="ECO:0000250" key="1">
    <source>
        <dbReference type="UniProtKB" id="Q01726"/>
    </source>
</evidence>
<evidence type="ECO:0000255" key="2"/>
<evidence type="ECO:0000255" key="3">
    <source>
        <dbReference type="PROSITE-ProRule" id="PRU00521"/>
    </source>
</evidence>
<comment type="function">
    <text evidence="1">Receptor for MSH (alpha, beta and gamma) and ACTH. The activity of this receptor is mediated by G proteins which activate adenylate cyclase. Mediates melanogenesis, the production of eumelanin (black/brown) and phaeomelanin (red/yellow), via regulation of cAMP signaling in melanocytes.</text>
</comment>
<comment type="subunit">
    <text evidence="1">Interacts with MGRN1, but does not undergo MGRN1-mediated ubiquitination; this interaction competes with GNAS-binding and thus inhibits agonist-induced cAMP production. Interacts with OPN3; the interaction results in a decrease in MC1R-mediated cAMP signaling and ultimately a decrease in melanin production in melanocytes.</text>
</comment>
<comment type="subcellular location">
    <subcellularLocation>
        <location evidence="1">Cell membrane</location>
        <topology evidence="2">Multi-pass membrane protein</topology>
    </subcellularLocation>
</comment>
<comment type="similarity">
    <text evidence="3">Belongs to the G-protein coupled receptor 1 family.</text>
</comment>
<sequence>MPIHGAPRKLLGSLNSTPTATPKLGLAANHTGAPCLEVSIPDGLFLSLGLVSLVENVLVVAAIAKNRNLHSPMYCFICCLALSDLLVSGSNMLEMAVVLLLEGGALATRASVVQQLHNTIDVLTCSSMLCSLCFLGAIAVDRHISIFYALRYHSIMTLPRAQRVIAAIWVASILSSTLFITYYDHAAVLLCLVVFFLAMLVLMAVLYVHMLARACQHAQGITRLHKRQPPAHQGFGLRGAATLTILLGIFFLCWGPFFLHLKLVVFCPQHLTCSCIFKNFKVFLTLIICNTIIDPLIYAFRSQELRRTLKEVLLCSW</sequence>
<organism>
    <name type="scientific">Saimiri oerstedii</name>
    <name type="common">Central American squirrel monkey</name>
    <dbReference type="NCBI Taxonomy" id="70928"/>
    <lineage>
        <taxon>Eukaryota</taxon>
        <taxon>Metazoa</taxon>
        <taxon>Chordata</taxon>
        <taxon>Craniata</taxon>
        <taxon>Vertebrata</taxon>
        <taxon>Euteleostomi</taxon>
        <taxon>Mammalia</taxon>
        <taxon>Eutheria</taxon>
        <taxon>Euarchontoglires</taxon>
        <taxon>Primates</taxon>
        <taxon>Haplorrhini</taxon>
        <taxon>Platyrrhini</taxon>
        <taxon>Cebidae</taxon>
        <taxon>Saimiriinae</taxon>
        <taxon>Saimiri</taxon>
    </lineage>
</organism>
<proteinExistence type="inferred from homology"/>